<organism>
    <name type="scientific">Rhodococcus opacus (strain B4)</name>
    <dbReference type="NCBI Taxonomy" id="632772"/>
    <lineage>
        <taxon>Bacteria</taxon>
        <taxon>Bacillati</taxon>
        <taxon>Actinomycetota</taxon>
        <taxon>Actinomycetes</taxon>
        <taxon>Mycobacteriales</taxon>
        <taxon>Nocardiaceae</taxon>
        <taxon>Rhodococcus</taxon>
    </lineage>
</organism>
<name>KCY_RHOOB</name>
<keyword id="KW-0067">ATP-binding</keyword>
<keyword id="KW-0963">Cytoplasm</keyword>
<keyword id="KW-0418">Kinase</keyword>
<keyword id="KW-0547">Nucleotide-binding</keyword>
<keyword id="KW-0808">Transferase</keyword>
<evidence type="ECO:0000255" key="1">
    <source>
        <dbReference type="HAMAP-Rule" id="MF_00238"/>
    </source>
</evidence>
<accession>C1ASX3</accession>
<sequence length="229" mass="24051">MSTSSLIVAMDGPSGTGKSSVSRMLARRLGARYLDTGAMYRIATLHVLRKGVDLADPDAIADATVGLPWSIGTDPAGEQVLLDGEDVGEEIRGDAVTKAVSAVSAVPAVRELLVAAQRRLACEAGRIVVEGRDIGTVVLPDADVKIYLTASAEARAQRRNAQNLAEGRGDDFAAVLADVQRRDHLDSTRAVSPLRPADDSVLVDTSELGIDDVIGRLLLVVSERSGVGQ</sequence>
<gene>
    <name evidence="1" type="primary">cmk</name>
    <name type="ordered locus">ROP_06580</name>
</gene>
<proteinExistence type="inferred from homology"/>
<comment type="catalytic activity">
    <reaction evidence="1">
        <text>CMP + ATP = CDP + ADP</text>
        <dbReference type="Rhea" id="RHEA:11600"/>
        <dbReference type="ChEBI" id="CHEBI:30616"/>
        <dbReference type="ChEBI" id="CHEBI:58069"/>
        <dbReference type="ChEBI" id="CHEBI:60377"/>
        <dbReference type="ChEBI" id="CHEBI:456216"/>
        <dbReference type="EC" id="2.7.4.25"/>
    </reaction>
</comment>
<comment type="catalytic activity">
    <reaction evidence="1">
        <text>dCMP + ATP = dCDP + ADP</text>
        <dbReference type="Rhea" id="RHEA:25094"/>
        <dbReference type="ChEBI" id="CHEBI:30616"/>
        <dbReference type="ChEBI" id="CHEBI:57566"/>
        <dbReference type="ChEBI" id="CHEBI:58593"/>
        <dbReference type="ChEBI" id="CHEBI:456216"/>
        <dbReference type="EC" id="2.7.4.25"/>
    </reaction>
</comment>
<comment type="subcellular location">
    <subcellularLocation>
        <location evidence="1">Cytoplasm</location>
    </subcellularLocation>
</comment>
<comment type="similarity">
    <text evidence="1">Belongs to the cytidylate kinase family. Type 1 subfamily.</text>
</comment>
<protein>
    <recommendedName>
        <fullName evidence="1">Cytidylate kinase</fullName>
        <shortName evidence="1">CK</shortName>
        <ecNumber evidence="1">2.7.4.25</ecNumber>
    </recommendedName>
    <alternativeName>
        <fullName evidence="1">Cytidine monophosphate kinase</fullName>
        <shortName evidence="1">CMP kinase</shortName>
    </alternativeName>
</protein>
<dbReference type="EC" id="2.7.4.25" evidence="1"/>
<dbReference type="EMBL" id="AP011115">
    <property type="protein sequence ID" value="BAH48905.1"/>
    <property type="molecule type" value="Genomic_DNA"/>
</dbReference>
<dbReference type="RefSeq" id="WP_012687908.1">
    <property type="nucleotide sequence ID" value="NC_012522.1"/>
</dbReference>
<dbReference type="SMR" id="C1ASX3"/>
<dbReference type="STRING" id="632772.ROP_06580"/>
<dbReference type="KEGG" id="rop:ROP_06580"/>
<dbReference type="PATRIC" id="fig|632772.20.peg.718"/>
<dbReference type="HOGENOM" id="CLU_079959_0_0_11"/>
<dbReference type="OrthoDB" id="9807434at2"/>
<dbReference type="Proteomes" id="UP000002212">
    <property type="component" value="Chromosome"/>
</dbReference>
<dbReference type="GO" id="GO:0005829">
    <property type="term" value="C:cytosol"/>
    <property type="evidence" value="ECO:0007669"/>
    <property type="project" value="TreeGrafter"/>
</dbReference>
<dbReference type="GO" id="GO:0005524">
    <property type="term" value="F:ATP binding"/>
    <property type="evidence" value="ECO:0007669"/>
    <property type="project" value="UniProtKB-UniRule"/>
</dbReference>
<dbReference type="GO" id="GO:0036430">
    <property type="term" value="F:CMP kinase activity"/>
    <property type="evidence" value="ECO:0007669"/>
    <property type="project" value="RHEA"/>
</dbReference>
<dbReference type="GO" id="GO:0036431">
    <property type="term" value="F:dCMP kinase activity"/>
    <property type="evidence" value="ECO:0007669"/>
    <property type="project" value="RHEA"/>
</dbReference>
<dbReference type="GO" id="GO:0015949">
    <property type="term" value="P:nucleobase-containing small molecule interconversion"/>
    <property type="evidence" value="ECO:0007669"/>
    <property type="project" value="TreeGrafter"/>
</dbReference>
<dbReference type="GO" id="GO:0006220">
    <property type="term" value="P:pyrimidine nucleotide metabolic process"/>
    <property type="evidence" value="ECO:0007669"/>
    <property type="project" value="UniProtKB-UniRule"/>
</dbReference>
<dbReference type="CDD" id="cd02020">
    <property type="entry name" value="CMPK"/>
    <property type="match status" value="1"/>
</dbReference>
<dbReference type="Gene3D" id="3.40.50.300">
    <property type="entry name" value="P-loop containing nucleotide triphosphate hydrolases"/>
    <property type="match status" value="1"/>
</dbReference>
<dbReference type="HAMAP" id="MF_00238">
    <property type="entry name" value="Cytidyl_kinase_type1"/>
    <property type="match status" value="1"/>
</dbReference>
<dbReference type="InterPro" id="IPR003136">
    <property type="entry name" value="Cytidylate_kin"/>
</dbReference>
<dbReference type="InterPro" id="IPR011994">
    <property type="entry name" value="Cytidylate_kinase_dom"/>
</dbReference>
<dbReference type="InterPro" id="IPR027417">
    <property type="entry name" value="P-loop_NTPase"/>
</dbReference>
<dbReference type="NCBIfam" id="TIGR00017">
    <property type="entry name" value="cmk"/>
    <property type="match status" value="1"/>
</dbReference>
<dbReference type="PANTHER" id="PTHR21299:SF2">
    <property type="entry name" value="CYTIDYLATE KINASE"/>
    <property type="match status" value="1"/>
</dbReference>
<dbReference type="PANTHER" id="PTHR21299">
    <property type="entry name" value="CYTIDYLATE KINASE/PANTOATE-BETA-ALANINE LIGASE"/>
    <property type="match status" value="1"/>
</dbReference>
<dbReference type="Pfam" id="PF02224">
    <property type="entry name" value="Cytidylate_kin"/>
    <property type="match status" value="1"/>
</dbReference>
<dbReference type="SUPFAM" id="SSF52540">
    <property type="entry name" value="P-loop containing nucleoside triphosphate hydrolases"/>
    <property type="match status" value="1"/>
</dbReference>
<feature type="chain" id="PRO_1000125295" description="Cytidylate kinase">
    <location>
        <begin position="1"/>
        <end position="229"/>
    </location>
</feature>
<feature type="binding site" evidence="1">
    <location>
        <begin position="12"/>
        <end position="20"/>
    </location>
    <ligand>
        <name>ATP</name>
        <dbReference type="ChEBI" id="CHEBI:30616"/>
    </ligand>
</feature>
<reference key="1">
    <citation type="submission" date="2009-03" db="EMBL/GenBank/DDBJ databases">
        <title>Comparison of the complete genome sequences of Rhodococcus erythropolis PR4 and Rhodococcus opacus B4.</title>
        <authorList>
            <person name="Takarada H."/>
            <person name="Sekine M."/>
            <person name="Hosoyama A."/>
            <person name="Yamada R."/>
            <person name="Fujisawa T."/>
            <person name="Omata S."/>
            <person name="Shimizu A."/>
            <person name="Tsukatani N."/>
            <person name="Tanikawa S."/>
            <person name="Fujita N."/>
            <person name="Harayama S."/>
        </authorList>
    </citation>
    <scope>NUCLEOTIDE SEQUENCE [LARGE SCALE GENOMIC DNA]</scope>
    <source>
        <strain>B4</strain>
    </source>
</reference>